<feature type="signal peptide" evidence="4">
    <location>
        <begin position="1"/>
        <end status="unknown"/>
    </location>
</feature>
<feature type="propeptide" id="PRO_0000383074" evidence="4">
    <location>
        <begin status="unknown"/>
        <end position="78"/>
    </location>
</feature>
<feature type="chain" id="PRO_0000383075" description="Protein hedgehog" evidence="1">
    <location>
        <begin position="79"/>
        <end position="465"/>
    </location>
</feature>
<feature type="chain" id="PRO_0000383076" description="Protein hedgehog N-product" evidence="1">
    <location>
        <begin position="79"/>
        <end position="251"/>
    </location>
</feature>
<feature type="binding site" evidence="2">
    <location>
        <position position="143"/>
    </location>
    <ligand>
        <name>Ca(2+)</name>
        <dbReference type="ChEBI" id="CHEBI:29108"/>
        <label>1</label>
    </ligand>
</feature>
<feature type="binding site" evidence="2">
    <location>
        <position position="144"/>
    </location>
    <ligand>
        <name>Ca(2+)</name>
        <dbReference type="ChEBI" id="CHEBI:29108"/>
        <label>1</label>
    </ligand>
</feature>
<feature type="binding site" evidence="2">
    <location>
        <position position="144"/>
    </location>
    <ligand>
        <name>Ca(2+)</name>
        <dbReference type="ChEBI" id="CHEBI:29108"/>
        <label>2</label>
    </ligand>
</feature>
<feature type="binding site" evidence="2">
    <location>
        <position position="149"/>
    </location>
    <ligand>
        <name>Ca(2+)</name>
        <dbReference type="ChEBI" id="CHEBI:29108"/>
        <label>1</label>
    </ligand>
</feature>
<feature type="binding site" evidence="2">
    <location>
        <position position="179"/>
    </location>
    <ligand>
        <name>Ca(2+)</name>
        <dbReference type="ChEBI" id="CHEBI:29108"/>
        <label>1</label>
    </ligand>
</feature>
<feature type="binding site" evidence="2">
    <location>
        <position position="180"/>
    </location>
    <ligand>
        <name>Ca(2+)</name>
        <dbReference type="ChEBI" id="CHEBI:29108"/>
        <label>1</label>
    </ligand>
</feature>
<feature type="binding site" evidence="2">
    <location>
        <position position="180"/>
    </location>
    <ligand>
        <name>Ca(2+)</name>
        <dbReference type="ChEBI" id="CHEBI:29108"/>
        <label>2</label>
    </ligand>
</feature>
<feature type="binding site" evidence="2">
    <location>
        <position position="183"/>
    </location>
    <ligand>
        <name>Ca(2+)</name>
        <dbReference type="ChEBI" id="CHEBI:29108"/>
        <label>2</label>
    </ligand>
</feature>
<feature type="binding site" evidence="2">
    <location>
        <position position="185"/>
    </location>
    <ligand>
        <name>Ca(2+)</name>
        <dbReference type="ChEBI" id="CHEBI:29108"/>
        <label>2</label>
    </ligand>
</feature>
<feature type="site" description="Cleavage; by autolysis" evidence="1">
    <location>
        <begin position="251"/>
        <end position="252"/>
    </location>
</feature>
<feature type="site" description="Involved in cholesterol transfer" evidence="1">
    <location>
        <position position="297"/>
    </location>
</feature>
<feature type="site" description="Involved in auto-cleavage" evidence="1">
    <location>
        <position position="320"/>
    </location>
</feature>
<feature type="site" description="Essential for auto-cleavage" evidence="1">
    <location>
        <position position="323"/>
    </location>
</feature>
<feature type="lipid moiety-binding region" description="N-palmitoyl cysteine" evidence="1">
    <location>
        <position position="79"/>
    </location>
</feature>
<feature type="lipid moiety-binding region" description="Cholesterol glycine ester" evidence="1">
    <location>
        <position position="251"/>
    </location>
</feature>
<organism>
    <name type="scientific">Drosophila sechellia</name>
    <name type="common">Fruit fly</name>
    <dbReference type="NCBI Taxonomy" id="7238"/>
    <lineage>
        <taxon>Eukaryota</taxon>
        <taxon>Metazoa</taxon>
        <taxon>Ecdysozoa</taxon>
        <taxon>Arthropoda</taxon>
        <taxon>Hexapoda</taxon>
        <taxon>Insecta</taxon>
        <taxon>Pterygota</taxon>
        <taxon>Neoptera</taxon>
        <taxon>Endopterygota</taxon>
        <taxon>Diptera</taxon>
        <taxon>Brachycera</taxon>
        <taxon>Muscomorpha</taxon>
        <taxon>Ephydroidea</taxon>
        <taxon>Drosophilidae</taxon>
        <taxon>Drosophila</taxon>
        <taxon>Sophophora</taxon>
    </lineage>
</organism>
<accession>B4HFB7</accession>
<protein>
    <recommendedName>
        <fullName evidence="1">Protein hedgehog</fullName>
        <ecNumber evidence="3">3.1.-.-</ecNumber>
    </recommendedName>
    <component>
        <recommendedName>
            <fullName evidence="1">Protein hedgehog N-product</fullName>
        </recommendedName>
    </component>
</protein>
<name>HH_DROSE</name>
<keyword id="KW-0068">Autocatalytic cleavage</keyword>
<keyword id="KW-0106">Calcium</keyword>
<keyword id="KW-1003">Cell membrane</keyword>
<keyword id="KW-0963">Cytoplasm</keyword>
<keyword id="KW-0217">Developmental protein</keyword>
<keyword id="KW-0378">Hydrolase</keyword>
<keyword id="KW-0449">Lipoprotein</keyword>
<keyword id="KW-0472">Membrane</keyword>
<keyword id="KW-0479">Metal-binding</keyword>
<keyword id="KW-0504">Morphogen</keyword>
<keyword id="KW-0539">Nucleus</keyword>
<keyword id="KW-0564">Palmitate</keyword>
<keyword id="KW-0645">Protease</keyword>
<keyword id="KW-1185">Reference proteome</keyword>
<keyword id="KW-0709">Segmentation polarity protein</keyword>
<keyword id="KW-0732">Signal</keyword>
<keyword id="KW-0808">Transferase</keyword>
<proteinExistence type="inferred from homology"/>
<sequence length="465" mass="51551">MDNHSSVPWASAASVTCLSLDAKCHSSSSKSAASSISASPETQTMRHIAHTQRCLSRLTSLVALLLIVLPMMFSPAHSCGPGRGLGRHRARNLYPLVLKQTIPNLSEYTNSASGPLEGVIRRDSPKFKDLVPNYNRDILFRDEEGTGADRLMSKRCKEKLNVLAYSVMNEWPGIRLLVTESWDEDYHHGQESLHYEGRAVTIATSDRDQSKYGMLARLAVEAGFDWVSYVSRRHIYCSVKSDSSISSHVHGCFTPESTALLESGVRKPLGELSIGDRVLSMTANGQAVYSEVILFMDRNLEQMQNFVQLHTDGGAVLTVTPAHLVSVWQPESQKLTFVFADRIEEKNQVLVRDVETGELRPQRVVKVGSVRSKGVVAPLTREGTIVVNSVAASCYAVINSQSLAHWGLAPMRLLSTLEAWLPAKEQLHSSPKVVSSAQQQNGIHWYANALYKVKDYVLPQSWRHD</sequence>
<dbReference type="EC" id="3.1.-.-" evidence="3"/>
<dbReference type="EMBL" id="CH480815">
    <property type="protein sequence ID" value="EDW43295.1"/>
    <property type="molecule type" value="Genomic_DNA"/>
</dbReference>
<dbReference type="BMRB" id="B4HFB7"/>
<dbReference type="SMR" id="B4HFB7"/>
<dbReference type="STRING" id="7238.B4HFB7"/>
<dbReference type="MEROPS" id="C46.001"/>
<dbReference type="EnsemblMetazoa" id="FBtr0206574">
    <property type="protein sequence ID" value="FBpp0205066"/>
    <property type="gene ID" value="FBgn0178454"/>
</dbReference>
<dbReference type="EnsemblMetazoa" id="XM_002032273.2">
    <property type="protein sequence ID" value="XP_002032309.1"/>
    <property type="gene ID" value="LOC6607540"/>
</dbReference>
<dbReference type="GeneID" id="6607540"/>
<dbReference type="KEGG" id="dse:6607540"/>
<dbReference type="CTD" id="42737"/>
<dbReference type="HOGENOM" id="CLU_034686_0_0_1"/>
<dbReference type="OMA" id="APAVRGC"/>
<dbReference type="OrthoDB" id="45941at7215"/>
<dbReference type="PhylomeDB" id="B4HFB7"/>
<dbReference type="Proteomes" id="UP000001292">
    <property type="component" value="Unassembled WGS sequence"/>
</dbReference>
<dbReference type="GO" id="GO:0030139">
    <property type="term" value="C:endocytic vesicle"/>
    <property type="evidence" value="ECO:0007669"/>
    <property type="project" value="EnsemblMetazoa"/>
</dbReference>
<dbReference type="GO" id="GO:0005768">
    <property type="term" value="C:endosome"/>
    <property type="evidence" value="ECO:0007669"/>
    <property type="project" value="EnsemblMetazoa"/>
</dbReference>
<dbReference type="GO" id="GO:0005615">
    <property type="term" value="C:extracellular space"/>
    <property type="evidence" value="ECO:0007669"/>
    <property type="project" value="EnsemblMetazoa"/>
</dbReference>
<dbReference type="GO" id="GO:0005634">
    <property type="term" value="C:nucleus"/>
    <property type="evidence" value="ECO:0007669"/>
    <property type="project" value="UniProtKB-SubCell"/>
</dbReference>
<dbReference type="GO" id="GO:0005886">
    <property type="term" value="C:plasma membrane"/>
    <property type="evidence" value="ECO:0007669"/>
    <property type="project" value="UniProtKB-SubCell"/>
</dbReference>
<dbReference type="GO" id="GO:0005509">
    <property type="term" value="F:calcium ion binding"/>
    <property type="evidence" value="ECO:0007669"/>
    <property type="project" value="TreeGrafter"/>
</dbReference>
<dbReference type="GO" id="GO:0140853">
    <property type="term" value="F:cholesterol-protein transferase activity"/>
    <property type="evidence" value="ECO:0000250"/>
    <property type="project" value="UniProtKB"/>
</dbReference>
<dbReference type="GO" id="GO:0016015">
    <property type="term" value="F:morphogen activity"/>
    <property type="evidence" value="ECO:0007669"/>
    <property type="project" value="UniProtKB-KW"/>
</dbReference>
<dbReference type="GO" id="GO:0005113">
    <property type="term" value="F:patched binding"/>
    <property type="evidence" value="ECO:0007669"/>
    <property type="project" value="EnsemblMetazoa"/>
</dbReference>
<dbReference type="GO" id="GO:0008233">
    <property type="term" value="F:peptidase activity"/>
    <property type="evidence" value="ECO:0000250"/>
    <property type="project" value="UniProtKB"/>
</dbReference>
<dbReference type="GO" id="GO:0001746">
    <property type="term" value="P:Bolwig's organ morphogenesis"/>
    <property type="evidence" value="ECO:0007669"/>
    <property type="project" value="EnsemblMetazoa"/>
</dbReference>
<dbReference type="GO" id="GO:0007267">
    <property type="term" value="P:cell-cell signaling"/>
    <property type="evidence" value="ECO:0007669"/>
    <property type="project" value="InterPro"/>
</dbReference>
<dbReference type="GO" id="GO:0035231">
    <property type="term" value="P:cytoneme assembly"/>
    <property type="evidence" value="ECO:0007669"/>
    <property type="project" value="EnsemblMetazoa"/>
</dbReference>
<dbReference type="GO" id="GO:0007427">
    <property type="term" value="P:epithelial cell migration, open tracheal system"/>
    <property type="evidence" value="ECO:0007669"/>
    <property type="project" value="EnsemblMetazoa"/>
</dbReference>
<dbReference type="GO" id="GO:0035224">
    <property type="term" value="P:genital disc anterior/posterior pattern formation"/>
    <property type="evidence" value="ECO:0007669"/>
    <property type="project" value="EnsemblMetazoa"/>
</dbReference>
<dbReference type="GO" id="GO:0008354">
    <property type="term" value="P:germ cell migration"/>
    <property type="evidence" value="ECO:0007669"/>
    <property type="project" value="EnsemblMetazoa"/>
</dbReference>
<dbReference type="GO" id="GO:0008347">
    <property type="term" value="P:glial cell migration"/>
    <property type="evidence" value="ECO:0007669"/>
    <property type="project" value="EnsemblMetazoa"/>
</dbReference>
<dbReference type="GO" id="GO:0007506">
    <property type="term" value="P:gonadal mesoderm development"/>
    <property type="evidence" value="ECO:0007669"/>
    <property type="project" value="EnsemblMetazoa"/>
</dbReference>
<dbReference type="GO" id="GO:0007442">
    <property type="term" value="P:hindgut morphogenesis"/>
    <property type="evidence" value="ECO:0007669"/>
    <property type="project" value="EnsemblMetazoa"/>
</dbReference>
<dbReference type="GO" id="GO:0007476">
    <property type="term" value="P:imaginal disc-derived wing morphogenesis"/>
    <property type="evidence" value="ECO:0007669"/>
    <property type="project" value="EnsemblMetazoa"/>
</dbReference>
<dbReference type="GO" id="GO:0016539">
    <property type="term" value="P:intein-mediated protein splicing"/>
    <property type="evidence" value="ECO:0007669"/>
    <property type="project" value="InterPro"/>
</dbReference>
<dbReference type="GO" id="GO:0035217">
    <property type="term" value="P:labial disc development"/>
    <property type="evidence" value="ECO:0007669"/>
    <property type="project" value="EnsemblMetazoa"/>
</dbReference>
<dbReference type="GO" id="GO:0016335">
    <property type="term" value="P:morphogenesis of larval imaginal disc epithelium"/>
    <property type="evidence" value="ECO:0007669"/>
    <property type="project" value="EnsemblMetazoa"/>
</dbReference>
<dbReference type="GO" id="GO:0002385">
    <property type="term" value="P:mucosal immune response"/>
    <property type="evidence" value="ECO:0007669"/>
    <property type="project" value="EnsemblMetazoa"/>
</dbReference>
<dbReference type="GO" id="GO:0034111">
    <property type="term" value="P:negative regulation of homotypic cell-cell adhesion"/>
    <property type="evidence" value="ECO:0007669"/>
    <property type="project" value="EnsemblMetazoa"/>
</dbReference>
<dbReference type="GO" id="GO:0045861">
    <property type="term" value="P:negative regulation of proteolysis"/>
    <property type="evidence" value="ECO:0007669"/>
    <property type="project" value="EnsemblMetazoa"/>
</dbReference>
<dbReference type="GO" id="GO:0002052">
    <property type="term" value="P:positive regulation of neuroblast proliferation"/>
    <property type="evidence" value="ECO:0007669"/>
    <property type="project" value="EnsemblMetazoa"/>
</dbReference>
<dbReference type="GO" id="GO:2000010">
    <property type="term" value="P:positive regulation of protein localization to cell surface"/>
    <property type="evidence" value="ECO:0007669"/>
    <property type="project" value="EnsemblMetazoa"/>
</dbReference>
<dbReference type="GO" id="GO:0007458">
    <property type="term" value="P:progression of morphogenetic furrow involved in compound eye morphogenesis"/>
    <property type="evidence" value="ECO:0007669"/>
    <property type="project" value="EnsemblMetazoa"/>
</dbReference>
<dbReference type="GO" id="GO:0016540">
    <property type="term" value="P:protein autoprocessing"/>
    <property type="evidence" value="ECO:0007669"/>
    <property type="project" value="EnsemblMetazoa"/>
</dbReference>
<dbReference type="GO" id="GO:2000495">
    <property type="term" value="P:regulation of cell proliferation involved in compound eye morphogenesis"/>
    <property type="evidence" value="ECO:0007669"/>
    <property type="project" value="EnsemblMetazoa"/>
</dbReference>
<dbReference type="GO" id="GO:2000274">
    <property type="term" value="P:regulation of epithelial cell migration, open tracheal system"/>
    <property type="evidence" value="ECO:0007669"/>
    <property type="project" value="EnsemblMetazoa"/>
</dbReference>
<dbReference type="GO" id="GO:0010468">
    <property type="term" value="P:regulation of gene expression"/>
    <property type="evidence" value="ECO:0007669"/>
    <property type="project" value="TreeGrafter"/>
</dbReference>
<dbReference type="GO" id="GO:0007346">
    <property type="term" value="P:regulation of mitotic cell cycle"/>
    <property type="evidence" value="ECO:0007669"/>
    <property type="project" value="EnsemblMetazoa"/>
</dbReference>
<dbReference type="GO" id="GO:0007367">
    <property type="term" value="P:segment polarity determination"/>
    <property type="evidence" value="ECO:0000250"/>
    <property type="project" value="UniProtKB"/>
</dbReference>
<dbReference type="GO" id="GO:0097264">
    <property type="term" value="P:self proteolysis"/>
    <property type="evidence" value="ECO:0000250"/>
    <property type="project" value="UniProtKB"/>
</dbReference>
<dbReference type="GO" id="GO:0007224">
    <property type="term" value="P:smoothened signaling pathway"/>
    <property type="evidence" value="ECO:0007669"/>
    <property type="project" value="EnsemblMetazoa"/>
</dbReference>
<dbReference type="GO" id="GO:0035277">
    <property type="term" value="P:spiracle morphogenesis, open tracheal system"/>
    <property type="evidence" value="ECO:0007669"/>
    <property type="project" value="EnsemblMetazoa"/>
</dbReference>
<dbReference type="GO" id="GO:0035154">
    <property type="term" value="P:terminal cell fate specification, open tracheal system"/>
    <property type="evidence" value="ECO:0007669"/>
    <property type="project" value="EnsemblMetazoa"/>
</dbReference>
<dbReference type="GO" id="GO:0007418">
    <property type="term" value="P:ventral midline development"/>
    <property type="evidence" value="ECO:0007669"/>
    <property type="project" value="EnsemblMetazoa"/>
</dbReference>
<dbReference type="GO" id="GO:0035222">
    <property type="term" value="P:wing disc pattern formation"/>
    <property type="evidence" value="ECO:0007669"/>
    <property type="project" value="EnsemblMetazoa"/>
</dbReference>
<dbReference type="CDD" id="cd00081">
    <property type="entry name" value="Hint"/>
    <property type="match status" value="1"/>
</dbReference>
<dbReference type="FunFam" id="2.170.16.10:FF:000001">
    <property type="entry name" value="Indian hedgehog"/>
    <property type="match status" value="1"/>
</dbReference>
<dbReference type="FunFam" id="3.30.1380.10:FF:000001">
    <property type="entry name" value="Indian hedgehog"/>
    <property type="match status" value="1"/>
</dbReference>
<dbReference type="Gene3D" id="3.30.1380.10">
    <property type="match status" value="1"/>
</dbReference>
<dbReference type="Gene3D" id="2.170.16.10">
    <property type="entry name" value="Hedgehog/Intein (Hint) domain"/>
    <property type="match status" value="1"/>
</dbReference>
<dbReference type="InterPro" id="IPR001657">
    <property type="entry name" value="Hedgehog"/>
</dbReference>
<dbReference type="InterPro" id="IPR001767">
    <property type="entry name" value="Hedgehog_Hint"/>
</dbReference>
<dbReference type="InterPro" id="IPR009045">
    <property type="entry name" value="Hedgehog_sig/DD-Pept_Zn-bd_sf"/>
</dbReference>
<dbReference type="InterPro" id="IPR050387">
    <property type="entry name" value="Hedgehog_Signaling"/>
</dbReference>
<dbReference type="InterPro" id="IPR000320">
    <property type="entry name" value="Hedgehog_signalling_dom"/>
</dbReference>
<dbReference type="InterPro" id="IPR003586">
    <property type="entry name" value="Hint_dom_C"/>
</dbReference>
<dbReference type="InterPro" id="IPR003587">
    <property type="entry name" value="Hint_dom_N"/>
</dbReference>
<dbReference type="InterPro" id="IPR036844">
    <property type="entry name" value="Hint_dom_sf"/>
</dbReference>
<dbReference type="InterPro" id="IPR006141">
    <property type="entry name" value="Intein_N"/>
</dbReference>
<dbReference type="PANTHER" id="PTHR11889">
    <property type="entry name" value="HEDGEHOG"/>
    <property type="match status" value="1"/>
</dbReference>
<dbReference type="PANTHER" id="PTHR11889:SF31">
    <property type="entry name" value="PROTEIN HEDGEHOG"/>
    <property type="match status" value="1"/>
</dbReference>
<dbReference type="Pfam" id="PF01085">
    <property type="entry name" value="HH_signal"/>
    <property type="match status" value="1"/>
</dbReference>
<dbReference type="Pfam" id="PF01079">
    <property type="entry name" value="Hint"/>
    <property type="match status" value="1"/>
</dbReference>
<dbReference type="PIRSF" id="PIRSF009400">
    <property type="entry name" value="Peptidase_C46"/>
    <property type="match status" value="1"/>
</dbReference>
<dbReference type="PRINTS" id="PR00632">
    <property type="entry name" value="SONICHHOG"/>
</dbReference>
<dbReference type="SMART" id="SM00305">
    <property type="entry name" value="HintC"/>
    <property type="match status" value="1"/>
</dbReference>
<dbReference type="SMART" id="SM00306">
    <property type="entry name" value="HintN"/>
    <property type="match status" value="1"/>
</dbReference>
<dbReference type="SUPFAM" id="SSF55166">
    <property type="entry name" value="Hedgehog/DD-peptidase"/>
    <property type="match status" value="1"/>
</dbReference>
<dbReference type="SUPFAM" id="SSF51294">
    <property type="entry name" value="Hedgehog/intein (Hint) domain"/>
    <property type="match status" value="1"/>
</dbReference>
<dbReference type="PROSITE" id="PS50817">
    <property type="entry name" value="INTEIN_N_TER"/>
    <property type="match status" value="1"/>
</dbReference>
<gene>
    <name evidence="1" type="primary">hh</name>
    <name type="ORF">GM23589</name>
</gene>
<comment type="function">
    <molecule>Protein hedgehog</molecule>
    <text evidence="1 3">The C-terminal part of the hedgehog protein precursor displays an autoproteolysis activity that results in the cleavage of the full-length protein into two parts (N-product and C-product) (By similarity). In addition, the C-terminal part displays a cholesterol transferase activity that results by the covalent attachment of a cholesterol moiety to the C-terminal of the newly generated N-product (By similarity). Once cleaved, the C-product has no signaling activity and diffuses from the cell (By similarity).</text>
</comment>
<comment type="function">
    <molecule>Protein hedgehog N-product</molecule>
    <text evidence="1">The dually lipidated hedgehog protein N-product is a morphogen which is essential for a variety of patterning events during development. Establishes the anterior-posterior axis of the embryonic segments and patterns the larval imaginal disks. Binds to the patched (ptc) receptor, which functions in association with smoothened (smo), to activate the transcription of target genes wingless (wg), decapentaplegic (dpp) and ptc. In the absence of hh, ptc represses the constitutive signaling activity of smo through fused (fu). Essential component of a signaling pathway which regulates the Duox-dependent gut immune response to bacterial uracil; required to activate Cad99C-dependent endosome formation, norpA-dependent Ca2+ mobilization and p38 MAPK, which are essential steps in the Duox-dependent production of reactive oxygen species (ROS) in response to intestinal bacterial infection. During photoreceptor differentiation, it up-regulates transcription of Ubr3, which in turn promotes the hh-signaling pathway by mediating the ubiquitination and degradation of cos.</text>
</comment>
<comment type="catalytic activity">
    <molecule>Protein hedgehog</molecule>
    <reaction evidence="3">
        <text>glycyl-L-cysteinyl-[protein] + cholesterol + H(+) = [protein]-C-terminal glycyl cholesterol ester + N-terminal L-cysteinyl-[protein]</text>
        <dbReference type="Rhea" id="RHEA:59504"/>
        <dbReference type="Rhea" id="RHEA-COMP:12707"/>
        <dbReference type="Rhea" id="RHEA-COMP:15369"/>
        <dbReference type="Rhea" id="RHEA-COMP:15374"/>
        <dbReference type="ChEBI" id="CHEBI:15378"/>
        <dbReference type="ChEBI" id="CHEBI:16113"/>
        <dbReference type="ChEBI" id="CHEBI:65250"/>
        <dbReference type="ChEBI" id="CHEBI:143135"/>
        <dbReference type="ChEBI" id="CHEBI:143140"/>
    </reaction>
    <physiologicalReaction direction="left-to-right" evidence="3">
        <dbReference type="Rhea" id="RHEA:59505"/>
    </physiologicalReaction>
</comment>
<comment type="subunit">
    <text evidence="1">Interacts with shf.</text>
</comment>
<comment type="subcellular location">
    <subcellularLocation>
        <location evidence="1">Nucleus</location>
    </subcellularLocation>
    <subcellularLocation>
        <location evidence="1">Cytoplasm</location>
    </subcellularLocation>
    <text evidence="1">Nuclear up to embryonic stage 10 and then at stage 11 shifts to the cytoplasm. Also secreted in either cleaved or uncleaved form to mediate signaling to other cells.</text>
</comment>
<comment type="subcellular location">
    <molecule>Protein hedgehog N-product</molecule>
    <subcellularLocation>
        <location evidence="1">Cell membrane</location>
        <topology evidence="1">Lipid-anchor</topology>
    </subcellularLocation>
    <text evidence="1">The N-terminal peptide remains associated with the cell surface. Heparan sulfate proteoglycans of the extracellular matrix play an essential role in diffusion. Lipophorin is required for diffusion, probably by acting as vehicle for its movement, explaining how it can spread over long distances despite its lipidation.</text>
</comment>
<comment type="PTM">
    <molecule>Protein hedgehog</molecule>
    <text evidence="1 2 3">The C-terminal part of the hedgehog protein precursor displays an autoproteolysis activity that results in the cleavage of the full-length protein into two parts (N-product and C-product) (By similarity). In addition, the C-terminal part displays a cholesterol transferase activity that results by the covalent attachment of a cholesterol moiety to the C-terminal of the newly generated N-product (By similarity). The N-product is the active species in both local and long-range signaling, whereas the C-product has no signaling activity (By similarity).</text>
</comment>
<comment type="PTM">
    <molecule>Protein hedgehog N-product</molecule>
    <text evidence="3">Cholesterylation is required for N-product targeting to lipid rafts and multimerization.</text>
</comment>
<comment type="PTM">
    <molecule>Protein hedgehog N-product</molecule>
    <text evidence="1">N-palmitoylation by Rasp of the hedgehog N-product, within the secretory pathway, is required for the embryonic and larval patterning activities of the hedgehog signal.</text>
</comment>
<comment type="similarity">
    <text evidence="4">Belongs to the hedgehog family.</text>
</comment>
<reference evidence="5" key="1">
    <citation type="journal article" date="2007" name="Nature">
        <title>Evolution of genes and genomes on the Drosophila phylogeny.</title>
        <authorList>
            <consortium name="Drosophila 12 genomes consortium"/>
        </authorList>
    </citation>
    <scope>NUCLEOTIDE SEQUENCE [LARGE SCALE GENOMIC DNA]</scope>
    <source>
        <strain evidence="5">Rob3c / Tucson 14021-0248.25</strain>
    </source>
</reference>
<evidence type="ECO:0000250" key="1">
    <source>
        <dbReference type="UniProtKB" id="Q02936"/>
    </source>
</evidence>
<evidence type="ECO:0000250" key="2">
    <source>
        <dbReference type="UniProtKB" id="Q15465"/>
    </source>
</evidence>
<evidence type="ECO:0000250" key="3">
    <source>
        <dbReference type="UniProtKB" id="Q62226"/>
    </source>
</evidence>
<evidence type="ECO:0000255" key="4"/>
<evidence type="ECO:0000312" key="5">
    <source>
        <dbReference type="EMBL" id="EDW43295.1"/>
    </source>
</evidence>